<name>RL28_BORPE</name>
<proteinExistence type="inferred from homology"/>
<gene>
    <name evidence="1" type="primary">rpmB</name>
    <name type="ordered locus">BP2051</name>
</gene>
<dbReference type="EMBL" id="BX640417">
    <property type="protein sequence ID" value="CAE42330.1"/>
    <property type="molecule type" value="Genomic_DNA"/>
</dbReference>
<dbReference type="RefSeq" id="NP_880718.1">
    <property type="nucleotide sequence ID" value="NC_002929.2"/>
</dbReference>
<dbReference type="RefSeq" id="WP_003810297.1">
    <property type="nucleotide sequence ID" value="NZ_CP039022.1"/>
</dbReference>
<dbReference type="SMR" id="Q7VWY1"/>
<dbReference type="STRING" id="257313.BP2051"/>
<dbReference type="PaxDb" id="257313-BP2051"/>
<dbReference type="GeneID" id="93203501"/>
<dbReference type="KEGG" id="bpe:BP2051"/>
<dbReference type="PATRIC" id="fig|257313.5.peg.2204"/>
<dbReference type="eggNOG" id="COG0227">
    <property type="taxonomic scope" value="Bacteria"/>
</dbReference>
<dbReference type="HOGENOM" id="CLU_064548_3_1_4"/>
<dbReference type="Proteomes" id="UP000002676">
    <property type="component" value="Chromosome"/>
</dbReference>
<dbReference type="GO" id="GO:0022625">
    <property type="term" value="C:cytosolic large ribosomal subunit"/>
    <property type="evidence" value="ECO:0007669"/>
    <property type="project" value="TreeGrafter"/>
</dbReference>
<dbReference type="GO" id="GO:0003735">
    <property type="term" value="F:structural constituent of ribosome"/>
    <property type="evidence" value="ECO:0007669"/>
    <property type="project" value="InterPro"/>
</dbReference>
<dbReference type="GO" id="GO:0006412">
    <property type="term" value="P:translation"/>
    <property type="evidence" value="ECO:0007669"/>
    <property type="project" value="UniProtKB-UniRule"/>
</dbReference>
<dbReference type="FunFam" id="2.30.170.40:FF:000001">
    <property type="entry name" value="50S ribosomal protein L28"/>
    <property type="match status" value="1"/>
</dbReference>
<dbReference type="Gene3D" id="2.30.170.40">
    <property type="entry name" value="Ribosomal protein L28/L24"/>
    <property type="match status" value="1"/>
</dbReference>
<dbReference type="HAMAP" id="MF_00373">
    <property type="entry name" value="Ribosomal_bL28"/>
    <property type="match status" value="1"/>
</dbReference>
<dbReference type="InterPro" id="IPR026569">
    <property type="entry name" value="Ribosomal_bL28"/>
</dbReference>
<dbReference type="InterPro" id="IPR034704">
    <property type="entry name" value="Ribosomal_bL28/bL31-like_sf"/>
</dbReference>
<dbReference type="InterPro" id="IPR001383">
    <property type="entry name" value="Ribosomal_bL28_bact-type"/>
</dbReference>
<dbReference type="InterPro" id="IPR037147">
    <property type="entry name" value="Ribosomal_bL28_sf"/>
</dbReference>
<dbReference type="NCBIfam" id="TIGR00009">
    <property type="entry name" value="L28"/>
    <property type="match status" value="1"/>
</dbReference>
<dbReference type="PANTHER" id="PTHR13528">
    <property type="entry name" value="39S RIBOSOMAL PROTEIN L28, MITOCHONDRIAL"/>
    <property type="match status" value="1"/>
</dbReference>
<dbReference type="PANTHER" id="PTHR13528:SF2">
    <property type="entry name" value="LARGE RIBOSOMAL SUBUNIT PROTEIN BL28M"/>
    <property type="match status" value="1"/>
</dbReference>
<dbReference type="Pfam" id="PF00830">
    <property type="entry name" value="Ribosomal_L28"/>
    <property type="match status" value="1"/>
</dbReference>
<dbReference type="SUPFAM" id="SSF143800">
    <property type="entry name" value="L28p-like"/>
    <property type="match status" value="1"/>
</dbReference>
<reference key="1">
    <citation type="journal article" date="2003" name="Nat. Genet.">
        <title>Comparative analysis of the genome sequences of Bordetella pertussis, Bordetella parapertussis and Bordetella bronchiseptica.</title>
        <authorList>
            <person name="Parkhill J."/>
            <person name="Sebaihia M."/>
            <person name="Preston A."/>
            <person name="Murphy L.D."/>
            <person name="Thomson N.R."/>
            <person name="Harris D.E."/>
            <person name="Holden M.T.G."/>
            <person name="Churcher C.M."/>
            <person name="Bentley S.D."/>
            <person name="Mungall K.L."/>
            <person name="Cerdeno-Tarraga A.-M."/>
            <person name="Temple L."/>
            <person name="James K.D."/>
            <person name="Harris B."/>
            <person name="Quail M.A."/>
            <person name="Achtman M."/>
            <person name="Atkin R."/>
            <person name="Baker S."/>
            <person name="Basham D."/>
            <person name="Bason N."/>
            <person name="Cherevach I."/>
            <person name="Chillingworth T."/>
            <person name="Collins M."/>
            <person name="Cronin A."/>
            <person name="Davis P."/>
            <person name="Doggett J."/>
            <person name="Feltwell T."/>
            <person name="Goble A."/>
            <person name="Hamlin N."/>
            <person name="Hauser H."/>
            <person name="Holroyd S."/>
            <person name="Jagels K."/>
            <person name="Leather S."/>
            <person name="Moule S."/>
            <person name="Norberczak H."/>
            <person name="O'Neil S."/>
            <person name="Ormond D."/>
            <person name="Price C."/>
            <person name="Rabbinowitsch E."/>
            <person name="Rutter S."/>
            <person name="Sanders M."/>
            <person name="Saunders D."/>
            <person name="Seeger K."/>
            <person name="Sharp S."/>
            <person name="Simmonds M."/>
            <person name="Skelton J."/>
            <person name="Squares R."/>
            <person name="Squares S."/>
            <person name="Stevens K."/>
            <person name="Unwin L."/>
            <person name="Whitehead S."/>
            <person name="Barrell B.G."/>
            <person name="Maskell D.J."/>
        </authorList>
    </citation>
    <scope>NUCLEOTIDE SEQUENCE [LARGE SCALE GENOMIC DNA]</scope>
    <source>
        <strain>Tohama I / ATCC BAA-589 / NCTC 13251</strain>
    </source>
</reference>
<feature type="chain" id="PRO_0000178440" description="Large ribosomal subunit protein bL28">
    <location>
        <begin position="1"/>
        <end position="78"/>
    </location>
</feature>
<evidence type="ECO:0000255" key="1">
    <source>
        <dbReference type="HAMAP-Rule" id="MF_00373"/>
    </source>
</evidence>
<evidence type="ECO:0000305" key="2"/>
<accession>Q7VWY1</accession>
<organism>
    <name type="scientific">Bordetella pertussis (strain Tohama I / ATCC BAA-589 / NCTC 13251)</name>
    <dbReference type="NCBI Taxonomy" id="257313"/>
    <lineage>
        <taxon>Bacteria</taxon>
        <taxon>Pseudomonadati</taxon>
        <taxon>Pseudomonadota</taxon>
        <taxon>Betaproteobacteria</taxon>
        <taxon>Burkholderiales</taxon>
        <taxon>Alcaligenaceae</taxon>
        <taxon>Bordetella</taxon>
    </lineage>
</organism>
<comment type="similarity">
    <text evidence="1">Belongs to the bacterial ribosomal protein bL28 family.</text>
</comment>
<sequence>MARVCQVTGKGPMVGNNVSHANNKTKRRFLPNLQSRRFWVESENRWVRLRVTAKAIRTIDKNGIDAVLADLRARGEAV</sequence>
<protein>
    <recommendedName>
        <fullName evidence="1">Large ribosomal subunit protein bL28</fullName>
    </recommendedName>
    <alternativeName>
        <fullName evidence="2">50S ribosomal protein L28</fullName>
    </alternativeName>
</protein>
<keyword id="KW-1185">Reference proteome</keyword>
<keyword id="KW-0687">Ribonucleoprotein</keyword>
<keyword id="KW-0689">Ribosomal protein</keyword>